<organism>
    <name type="scientific">Salmonella newport (strain SL254)</name>
    <dbReference type="NCBI Taxonomy" id="423368"/>
    <lineage>
        <taxon>Bacteria</taxon>
        <taxon>Pseudomonadati</taxon>
        <taxon>Pseudomonadota</taxon>
        <taxon>Gammaproteobacteria</taxon>
        <taxon>Enterobacterales</taxon>
        <taxon>Enterobacteriaceae</taxon>
        <taxon>Salmonella</taxon>
    </lineage>
</organism>
<sequence>MVPVVALVGRPNVGKSTLFNRLTRTRDALVADFPGLTRDRKYGRAEVEGREFICIDTGGIDGTEDGVETRMAEQSLLAIEEADVVLFMVDARAGLMPADEAIAKHLRSREKPTFLVANKTDGLDPDQAVVDFYSLGLGEIYPIAASHGRGVLSLLEHVLLPWMDDVAPQEEVDEDAEYWAQFEAEQNGEEAPEDDFDPQSLPIKLAIVGRPNVGKSTLTNRILGEERVVVYDMPGTTRDSIYIPMERDEREYVLIDTAGVRKRGKITDAVEKFSVIKTLQAIEDANVVLLVIDAREGISDQDLSLLGFILNSGRSLVIVVNKWDGLSQEVKEQVKETLDFRLGFIDFARVHFISALHGSGVGNLFESVREAYDSSTRRVSTAMLTRIMTMAVEDHQPPLVRGRRVKLKYAHAGGYNPPIVVIHGNQVKDLPDSYKRYLMNYFRKSLEVMGTPIRIQFKEGENPYANKRNTLTPTQMRKRKRLMKHIKKSK</sequence>
<protein>
    <recommendedName>
        <fullName evidence="1">GTPase Der</fullName>
    </recommendedName>
    <alternativeName>
        <fullName evidence="1">GTP-binding protein EngA</fullName>
    </alternativeName>
</protein>
<dbReference type="EMBL" id="CP001113">
    <property type="protein sequence ID" value="ACF64964.1"/>
    <property type="molecule type" value="Genomic_DNA"/>
</dbReference>
<dbReference type="RefSeq" id="WP_000249411.1">
    <property type="nucleotide sequence ID" value="NZ_CCMR01000001.1"/>
</dbReference>
<dbReference type="SMR" id="B4T0P5"/>
<dbReference type="KEGG" id="see:SNSL254_A2713"/>
<dbReference type="HOGENOM" id="CLU_016077_6_2_6"/>
<dbReference type="Proteomes" id="UP000008824">
    <property type="component" value="Chromosome"/>
</dbReference>
<dbReference type="GO" id="GO:0005525">
    <property type="term" value="F:GTP binding"/>
    <property type="evidence" value="ECO:0007669"/>
    <property type="project" value="UniProtKB-UniRule"/>
</dbReference>
<dbReference type="GO" id="GO:0043022">
    <property type="term" value="F:ribosome binding"/>
    <property type="evidence" value="ECO:0007669"/>
    <property type="project" value="TreeGrafter"/>
</dbReference>
<dbReference type="GO" id="GO:0042254">
    <property type="term" value="P:ribosome biogenesis"/>
    <property type="evidence" value="ECO:0007669"/>
    <property type="project" value="UniProtKB-KW"/>
</dbReference>
<dbReference type="CDD" id="cd01894">
    <property type="entry name" value="EngA1"/>
    <property type="match status" value="1"/>
</dbReference>
<dbReference type="CDD" id="cd01895">
    <property type="entry name" value="EngA2"/>
    <property type="match status" value="1"/>
</dbReference>
<dbReference type="FunFam" id="3.30.300.20:FF:000004">
    <property type="entry name" value="GTPase Der"/>
    <property type="match status" value="1"/>
</dbReference>
<dbReference type="FunFam" id="3.40.50.300:FF:000040">
    <property type="entry name" value="GTPase Der"/>
    <property type="match status" value="1"/>
</dbReference>
<dbReference type="FunFam" id="3.40.50.300:FF:000057">
    <property type="entry name" value="GTPase Der"/>
    <property type="match status" value="1"/>
</dbReference>
<dbReference type="Gene3D" id="3.30.300.20">
    <property type="match status" value="1"/>
</dbReference>
<dbReference type="Gene3D" id="3.40.50.300">
    <property type="entry name" value="P-loop containing nucleotide triphosphate hydrolases"/>
    <property type="match status" value="2"/>
</dbReference>
<dbReference type="HAMAP" id="MF_00195">
    <property type="entry name" value="GTPase_Der"/>
    <property type="match status" value="1"/>
</dbReference>
<dbReference type="InterPro" id="IPR031166">
    <property type="entry name" value="G_ENGA"/>
</dbReference>
<dbReference type="InterPro" id="IPR006073">
    <property type="entry name" value="GTP-bd"/>
</dbReference>
<dbReference type="InterPro" id="IPR016484">
    <property type="entry name" value="GTPase_Der"/>
</dbReference>
<dbReference type="InterPro" id="IPR032859">
    <property type="entry name" value="KH_dom-like"/>
</dbReference>
<dbReference type="InterPro" id="IPR015946">
    <property type="entry name" value="KH_dom-like_a/b"/>
</dbReference>
<dbReference type="InterPro" id="IPR027417">
    <property type="entry name" value="P-loop_NTPase"/>
</dbReference>
<dbReference type="InterPro" id="IPR005225">
    <property type="entry name" value="Small_GTP-bd"/>
</dbReference>
<dbReference type="NCBIfam" id="TIGR03594">
    <property type="entry name" value="GTPase_EngA"/>
    <property type="match status" value="1"/>
</dbReference>
<dbReference type="NCBIfam" id="TIGR00231">
    <property type="entry name" value="small_GTP"/>
    <property type="match status" value="2"/>
</dbReference>
<dbReference type="PANTHER" id="PTHR43834">
    <property type="entry name" value="GTPASE DER"/>
    <property type="match status" value="1"/>
</dbReference>
<dbReference type="PANTHER" id="PTHR43834:SF6">
    <property type="entry name" value="GTPASE DER"/>
    <property type="match status" value="1"/>
</dbReference>
<dbReference type="Pfam" id="PF14714">
    <property type="entry name" value="KH_dom-like"/>
    <property type="match status" value="1"/>
</dbReference>
<dbReference type="Pfam" id="PF01926">
    <property type="entry name" value="MMR_HSR1"/>
    <property type="match status" value="2"/>
</dbReference>
<dbReference type="PIRSF" id="PIRSF006485">
    <property type="entry name" value="GTP-binding_EngA"/>
    <property type="match status" value="1"/>
</dbReference>
<dbReference type="PRINTS" id="PR00326">
    <property type="entry name" value="GTP1OBG"/>
</dbReference>
<dbReference type="SUPFAM" id="SSF52540">
    <property type="entry name" value="P-loop containing nucleoside triphosphate hydrolases"/>
    <property type="match status" value="2"/>
</dbReference>
<dbReference type="PROSITE" id="PS51712">
    <property type="entry name" value="G_ENGA"/>
    <property type="match status" value="2"/>
</dbReference>
<comment type="function">
    <text evidence="1">GTPase that plays an essential role in the late steps of ribosome biogenesis.</text>
</comment>
<comment type="subunit">
    <text evidence="1">Associates with the 50S ribosomal subunit.</text>
</comment>
<comment type="similarity">
    <text evidence="1">Belongs to the TRAFAC class TrmE-Era-EngA-EngB-Septin-like GTPase superfamily. EngA (Der) GTPase family.</text>
</comment>
<proteinExistence type="inferred from homology"/>
<evidence type="ECO:0000255" key="1">
    <source>
        <dbReference type="HAMAP-Rule" id="MF_00195"/>
    </source>
</evidence>
<accession>B4T0P5</accession>
<keyword id="KW-0342">GTP-binding</keyword>
<keyword id="KW-0547">Nucleotide-binding</keyword>
<keyword id="KW-0677">Repeat</keyword>
<keyword id="KW-0690">Ribosome biogenesis</keyword>
<reference key="1">
    <citation type="journal article" date="2011" name="J. Bacteriol.">
        <title>Comparative genomics of 28 Salmonella enterica isolates: evidence for CRISPR-mediated adaptive sublineage evolution.</title>
        <authorList>
            <person name="Fricke W.F."/>
            <person name="Mammel M.K."/>
            <person name="McDermott P.F."/>
            <person name="Tartera C."/>
            <person name="White D.G."/>
            <person name="Leclerc J.E."/>
            <person name="Ravel J."/>
            <person name="Cebula T.A."/>
        </authorList>
    </citation>
    <scope>NUCLEOTIDE SEQUENCE [LARGE SCALE GENOMIC DNA]</scope>
    <source>
        <strain>SL254</strain>
    </source>
</reference>
<gene>
    <name evidence="1" type="primary">der</name>
    <name type="synonym">engA</name>
    <name type="ordered locus">SNSL254_A2713</name>
</gene>
<name>DER_SALNS</name>
<feature type="chain" id="PRO_1000099158" description="GTPase Der">
    <location>
        <begin position="1"/>
        <end position="490"/>
    </location>
</feature>
<feature type="domain" description="EngA-type G 1">
    <location>
        <begin position="3"/>
        <end position="166"/>
    </location>
</feature>
<feature type="domain" description="EngA-type G 2">
    <location>
        <begin position="203"/>
        <end position="376"/>
    </location>
</feature>
<feature type="domain" description="KH-like" evidence="1">
    <location>
        <begin position="377"/>
        <end position="461"/>
    </location>
</feature>
<feature type="binding site" evidence="1">
    <location>
        <begin position="9"/>
        <end position="16"/>
    </location>
    <ligand>
        <name>GTP</name>
        <dbReference type="ChEBI" id="CHEBI:37565"/>
        <label>1</label>
    </ligand>
</feature>
<feature type="binding site" evidence="1">
    <location>
        <begin position="56"/>
        <end position="60"/>
    </location>
    <ligand>
        <name>GTP</name>
        <dbReference type="ChEBI" id="CHEBI:37565"/>
        <label>1</label>
    </ligand>
</feature>
<feature type="binding site" evidence="1">
    <location>
        <begin position="118"/>
        <end position="121"/>
    </location>
    <ligand>
        <name>GTP</name>
        <dbReference type="ChEBI" id="CHEBI:37565"/>
        <label>1</label>
    </ligand>
</feature>
<feature type="binding site" evidence="1">
    <location>
        <begin position="209"/>
        <end position="216"/>
    </location>
    <ligand>
        <name>GTP</name>
        <dbReference type="ChEBI" id="CHEBI:37565"/>
        <label>2</label>
    </ligand>
</feature>
<feature type="binding site" evidence="1">
    <location>
        <begin position="256"/>
        <end position="260"/>
    </location>
    <ligand>
        <name>GTP</name>
        <dbReference type="ChEBI" id="CHEBI:37565"/>
        <label>2</label>
    </ligand>
</feature>
<feature type="binding site" evidence="1">
    <location>
        <begin position="321"/>
        <end position="324"/>
    </location>
    <ligand>
        <name>GTP</name>
        <dbReference type="ChEBI" id="CHEBI:37565"/>
        <label>2</label>
    </ligand>
</feature>